<evidence type="ECO:0000269" key="1">
    <source>
    </source>
</evidence>
<evidence type="ECO:0000269" key="2">
    <source>
    </source>
</evidence>
<reference key="1">
    <citation type="journal article" date="1988" name="Nucleic Acids Res.">
        <title>Genome organization of the killer plasmid pGKL2 from Kluyveromyces lactis.</title>
        <authorList>
            <person name="Tommasino M."/>
            <person name="Ricci S."/>
            <person name="Galeotti C.L."/>
        </authorList>
    </citation>
    <scope>NUCLEOTIDE SEQUENCE [GENOMIC DNA]</scope>
    <source>
        <strain>ATCC 8585 / CBS 2359 / DSM 70799 / NBRC 1267 / NRRL Y-1140 / WM37</strain>
    </source>
</reference>
<reference key="2">
    <citation type="journal article" date="1988" name="Nucleic Acids Res.">
        <title>Extranuclear gene expression in yeast: evidence for a plasmid-encoded RNA polymerase of unique structure.</title>
        <authorList>
            <person name="Wilson D.W."/>
            <person name="Meacock P.A."/>
        </authorList>
    </citation>
    <scope>NUCLEOTIDE SEQUENCE [GENOMIC DNA]</scope>
    <source>
        <strain>ATCC 8585 / CBS 2359 / DSM 70799 / NBRC 1267 / NRRL Y-1140 / WM37</strain>
    </source>
</reference>
<reference key="3">
    <citation type="journal article" date="1991" name="Yeast">
        <title>Killer system of Kluyveromyces lactis: the open reading frame 10 of the pGKL2 plasmid encodes a putative DNA binding protein.</title>
        <authorList>
            <person name="Tommasino M."/>
        </authorList>
    </citation>
    <scope>FUNCTION</scope>
</reference>
<reference key="4">
    <citation type="journal article" date="1991" name="Proc. Natl. Acad. Sci. U.S.A.">
        <title>Terminal region recognition factor 1, a DNA-binding protein recognizing the inverted terminal repeats of the pGKl linear DNA plasmids.</title>
        <authorList>
            <person name="McNeel D.G."/>
            <person name="Tamanoi F."/>
        </authorList>
    </citation>
    <scope>FUNCTION</scope>
</reference>
<protein>
    <recommendedName>
        <fullName>DNA-binding protein TRF1</fullName>
    </recommendedName>
    <alternativeName>
        <fullName>Terminal region recognition factor 1</fullName>
    </alternativeName>
</protein>
<sequence>MANKQAEKLITAIKKDYLKEIIKKIEELDIDKKDYIVEKLKEEKPKKKRNAPKIPLNKQCTKETASKGKCTVAACYNHICWAHMNKTQRNEYRLLKSVDIKTI</sequence>
<comment type="function">
    <text evidence="1 2">DNA-binding protein that recognizes the inverted terminal repeats of the pGKl linear DNA plasmids.</text>
</comment>
<dbReference type="EMBL" id="X07776">
    <property type="protein sequence ID" value="CAA30611.1"/>
    <property type="molecule type" value="Genomic_DNA"/>
</dbReference>
<dbReference type="EMBL" id="X07946">
    <property type="protein sequence ID" value="CAA30767.1"/>
    <property type="molecule type" value="Genomic_DNA"/>
</dbReference>
<dbReference type="PIR" id="S00968">
    <property type="entry name" value="TRVKG1"/>
</dbReference>
<dbReference type="SMR" id="P05476"/>
<dbReference type="PaxDb" id="284590-P05476"/>
<dbReference type="InParanoid" id="P05476"/>
<dbReference type="GO" id="GO:0003677">
    <property type="term" value="F:DNA binding"/>
    <property type="evidence" value="ECO:0007669"/>
    <property type="project" value="UniProtKB-KW"/>
</dbReference>
<keyword id="KW-0238">DNA-binding</keyword>
<keyword id="KW-0614">Plasmid</keyword>
<geneLocation type="plasmid">
    <name>pGKl-2</name>
</geneLocation>
<accession>P05476</accession>
<name>TRF1_KLULA</name>
<feature type="chain" id="PRO_0000065628" description="DNA-binding protein TRF1">
    <location>
        <begin position="1"/>
        <end position="103"/>
    </location>
</feature>
<proteinExistence type="predicted"/>
<gene>
    <name type="primary">TRF1</name>
</gene>
<organism>
    <name type="scientific">Kluyveromyces lactis (strain ATCC 8585 / CBS 2359 / DSM 70799 / NBRC 1267 / NRRL Y-1140 / WM37)</name>
    <name type="common">Yeast</name>
    <name type="synonym">Candida sphaerica</name>
    <dbReference type="NCBI Taxonomy" id="284590"/>
    <lineage>
        <taxon>Eukaryota</taxon>
        <taxon>Fungi</taxon>
        <taxon>Dikarya</taxon>
        <taxon>Ascomycota</taxon>
        <taxon>Saccharomycotina</taxon>
        <taxon>Saccharomycetes</taxon>
        <taxon>Saccharomycetales</taxon>
        <taxon>Saccharomycetaceae</taxon>
        <taxon>Kluyveromyces</taxon>
    </lineage>
</organism>